<proteinExistence type="inferred from homology"/>
<organismHost>
    <name type="scientific">Vertebrata</name>
    <dbReference type="NCBI Taxonomy" id="7742"/>
</organismHost>
<feature type="chain" id="PRO_0000174930" description="Thymidine kinase">
    <location>
        <begin position="1"/>
        <end position="183"/>
    </location>
</feature>
<feature type="active site" description="Proton acceptor" evidence="2">
    <location>
        <position position="89"/>
    </location>
</feature>
<feature type="binding site" evidence="1">
    <location>
        <begin position="11"/>
        <end position="18"/>
    </location>
    <ligand>
        <name>ATP</name>
        <dbReference type="ChEBI" id="CHEBI:30616"/>
    </ligand>
</feature>
<feature type="binding site" evidence="1">
    <location>
        <position position="119"/>
    </location>
    <ligand>
        <name>substrate</name>
    </ligand>
</feature>
<feature type="binding site" evidence="1">
    <location>
        <position position="144"/>
    </location>
    <ligand>
        <name>Zn(2+)</name>
        <dbReference type="ChEBI" id="CHEBI:29105"/>
    </ligand>
</feature>
<feature type="binding site" evidence="1">
    <location>
        <position position="147"/>
    </location>
    <ligand>
        <name>Zn(2+)</name>
        <dbReference type="ChEBI" id="CHEBI:29105"/>
    </ligand>
</feature>
<feature type="binding site" evidence="1">
    <location>
        <begin position="163"/>
        <end position="167"/>
    </location>
    <ligand>
        <name>substrate</name>
    </ligand>
</feature>
<feature type="binding site" evidence="1">
    <location>
        <position position="176"/>
    </location>
    <ligand>
        <name>Zn(2+)</name>
        <dbReference type="ChEBI" id="CHEBI:29105"/>
    </ligand>
</feature>
<feature type="binding site" evidence="1">
    <location>
        <position position="179"/>
    </location>
    <ligand>
        <name>Zn(2+)</name>
        <dbReference type="ChEBI" id="CHEBI:29105"/>
    </ligand>
</feature>
<name>KITH_FOWPN</name>
<gene>
    <name type="primary">TK</name>
    <name type="ordered locus">FPV086</name>
</gene>
<dbReference type="EC" id="2.7.1.21"/>
<dbReference type="EMBL" id="M16617">
    <property type="protein sequence ID" value="AAA43822.1"/>
    <property type="molecule type" value="Genomic_DNA"/>
</dbReference>
<dbReference type="EMBL" id="D00321">
    <property type="protein sequence ID" value="BAA00233.1"/>
    <property type="molecule type" value="Genomic_DNA"/>
</dbReference>
<dbReference type="EMBL" id="AJ223385">
    <property type="protein sequence ID" value="CAA11295.1"/>
    <property type="molecule type" value="Genomic_DNA"/>
</dbReference>
<dbReference type="EMBL" id="X52860">
    <property type="protein sequence ID" value="CAA37041.1"/>
    <property type="molecule type" value="Genomic_DNA"/>
</dbReference>
<dbReference type="EMBL" id="AF198100">
    <property type="protein sequence ID" value="AAF44430.1"/>
    <property type="molecule type" value="Genomic_DNA"/>
</dbReference>
<dbReference type="EMBL" id="AF396867">
    <property type="protein sequence ID" value="AAK77606.1"/>
    <property type="molecule type" value="Genomic_DNA"/>
</dbReference>
<dbReference type="PIR" id="A27532">
    <property type="entry name" value="KIVZFP"/>
</dbReference>
<dbReference type="RefSeq" id="NP_039049.1">
    <property type="nucleotide sequence ID" value="NC_002188.1"/>
</dbReference>
<dbReference type="SMR" id="P10052"/>
<dbReference type="GeneID" id="1486634"/>
<dbReference type="KEGG" id="vg:1486634"/>
<dbReference type="Proteomes" id="UP000008597">
    <property type="component" value="Segment"/>
</dbReference>
<dbReference type="GO" id="GO:0005524">
    <property type="term" value="F:ATP binding"/>
    <property type="evidence" value="ECO:0007669"/>
    <property type="project" value="UniProtKB-KW"/>
</dbReference>
<dbReference type="GO" id="GO:0046872">
    <property type="term" value="F:metal ion binding"/>
    <property type="evidence" value="ECO:0007669"/>
    <property type="project" value="UniProtKB-KW"/>
</dbReference>
<dbReference type="GO" id="GO:0004797">
    <property type="term" value="F:thymidine kinase activity"/>
    <property type="evidence" value="ECO:0007669"/>
    <property type="project" value="UniProtKB-EC"/>
</dbReference>
<dbReference type="GO" id="GO:0071897">
    <property type="term" value="P:DNA biosynthetic process"/>
    <property type="evidence" value="ECO:0007669"/>
    <property type="project" value="UniProtKB-KW"/>
</dbReference>
<dbReference type="GO" id="GO:0046104">
    <property type="term" value="P:thymidine metabolic process"/>
    <property type="evidence" value="ECO:0007669"/>
    <property type="project" value="TreeGrafter"/>
</dbReference>
<dbReference type="FunFam" id="3.40.50.300:FF:000948">
    <property type="entry name" value="Thymidine kinase"/>
    <property type="match status" value="1"/>
</dbReference>
<dbReference type="Gene3D" id="3.30.60.20">
    <property type="match status" value="1"/>
</dbReference>
<dbReference type="Gene3D" id="3.40.50.300">
    <property type="entry name" value="P-loop containing nucleotide triphosphate hydrolases"/>
    <property type="match status" value="1"/>
</dbReference>
<dbReference type="InterPro" id="IPR027417">
    <property type="entry name" value="P-loop_NTPase"/>
</dbReference>
<dbReference type="InterPro" id="IPR001267">
    <property type="entry name" value="Thymidine_kinase"/>
</dbReference>
<dbReference type="InterPro" id="IPR020633">
    <property type="entry name" value="Thymidine_kinase_CS"/>
</dbReference>
<dbReference type="PANTHER" id="PTHR11441">
    <property type="entry name" value="THYMIDINE KINASE"/>
    <property type="match status" value="1"/>
</dbReference>
<dbReference type="PANTHER" id="PTHR11441:SF0">
    <property type="entry name" value="THYMIDINE KINASE, CYTOSOLIC"/>
    <property type="match status" value="1"/>
</dbReference>
<dbReference type="Pfam" id="PF00265">
    <property type="entry name" value="TK"/>
    <property type="match status" value="1"/>
</dbReference>
<dbReference type="PIRSF" id="PIRSF035805">
    <property type="entry name" value="TK_cell"/>
    <property type="match status" value="1"/>
</dbReference>
<dbReference type="SUPFAM" id="SSF57716">
    <property type="entry name" value="Glucocorticoid receptor-like (DNA-binding domain)"/>
    <property type="match status" value="1"/>
</dbReference>
<dbReference type="SUPFAM" id="SSF52540">
    <property type="entry name" value="P-loop containing nucleoside triphosphate hydrolases"/>
    <property type="match status" value="1"/>
</dbReference>
<dbReference type="PROSITE" id="PS00603">
    <property type="entry name" value="TK_CELLULAR_TYPE"/>
    <property type="match status" value="1"/>
</dbReference>
<evidence type="ECO:0000250" key="1"/>
<evidence type="ECO:0000255" key="2"/>
<evidence type="ECO:0000305" key="3"/>
<reference key="1">
    <citation type="journal article" date="1987" name="Virology">
        <title>Fowlpox virus thymidine kinase: nucleotide sequence and relationships to other thymidine kinases.</title>
        <authorList>
            <person name="Boyle D.B."/>
            <person name="Coupar B.E.H."/>
            <person name="Gibbs A.J."/>
            <person name="Seigman L.J."/>
            <person name="Both G.W."/>
        </authorList>
    </citation>
    <scope>NUCLEOTIDE SEQUENCE [GENOMIC DNA]</scope>
</reference>
<reference key="2">
    <citation type="journal article" date="1988" name="J. Gen. Virol.">
        <title>Comparison of a conserved region in fowlpox virus and vaccinia virus genomes and the translocation of the fowlpox virus thymidine kinase gene.</title>
        <authorList>
            <person name="Binns M.M."/>
            <person name="Tomley F.M."/>
            <person name="Campbell J."/>
            <person name="Boursnell M.E.G."/>
        </authorList>
    </citation>
    <scope>NUCLEOTIDE SEQUENCE [GENOMIC DNA]</scope>
    <source>
        <strain>FP-9 / Isolate HP-440</strain>
    </source>
</reference>
<reference key="3">
    <citation type="journal article" date="1992" name="Virus Res.">
        <title>Gene translocations in poxviruses: the fowlpox virus thymidine kinase gene is flanked by 15 bp direct repeats and occupies the locus which in vaccinia virus is occupied by the ribonucleotide reductase large subunit gene.</title>
        <authorList>
            <person name="Binns M.M."/>
            <person name="Boursnell M.E.G."/>
            <person name="Skinner M.A."/>
        </authorList>
    </citation>
    <scope>NUCLEOTIDE SEQUENCE [GENOMIC DNA]</scope>
    <source>
        <strain>FP-9 / Isolate HP-440</strain>
    </source>
</reference>
<reference key="4">
    <citation type="submission" date="1990-04" db="EMBL/GenBank/DDBJ databases">
        <authorList>
            <person name="Beisel C.E."/>
            <person name="Nazerian K."/>
        </authorList>
    </citation>
    <scope>NUCLEOTIDE SEQUENCE [GENOMIC DNA]</scope>
    <source>
        <strain>Vaccine</strain>
    </source>
</reference>
<reference key="5">
    <citation type="submission" date="2001-07" db="EMBL/GenBank/DDBJ databases">
        <title>Sequence of thymidine kinase gene of Indian isolate of fowlpox virus.</title>
        <authorList>
            <person name="Senthilvelan A."/>
            <person name="Purushothaman V."/>
            <person name="Palaniswami K."/>
        </authorList>
    </citation>
    <scope>NUCLEOTIDE SEQUENCE [GENOMIC DNA]</scope>
</reference>
<reference key="6">
    <citation type="journal article" date="2000" name="J. Virol.">
        <title>The genome of fowlpox virus.</title>
        <authorList>
            <person name="Afonso C.L."/>
            <person name="Tulman E.R."/>
            <person name="Lu Z."/>
            <person name="Zsak L."/>
            <person name="Kutish G.F."/>
            <person name="Rock D.L."/>
        </authorList>
    </citation>
    <scope>NUCLEOTIDE SEQUENCE [LARGE SCALE GENOMIC DNA]</scope>
</reference>
<accession>P10052</accession>
<organism>
    <name type="scientific">Fowlpox virus (strain NVSL)</name>
    <name type="common">FPV</name>
    <dbReference type="NCBI Taxonomy" id="928301"/>
    <lineage>
        <taxon>Viruses</taxon>
        <taxon>Varidnaviria</taxon>
        <taxon>Bamfordvirae</taxon>
        <taxon>Nucleocytoviricota</taxon>
        <taxon>Pokkesviricetes</taxon>
        <taxon>Chitovirales</taxon>
        <taxon>Poxviridae</taxon>
        <taxon>Chordopoxvirinae</taxon>
        <taxon>Avipoxvirus</taxon>
        <taxon>Fowlpox virus</taxon>
    </lineage>
</organism>
<protein>
    <recommendedName>
        <fullName>Thymidine kinase</fullName>
        <ecNumber>2.7.1.21</ecNumber>
    </recommendedName>
</protein>
<comment type="catalytic activity">
    <reaction>
        <text>thymidine + ATP = dTMP + ADP + H(+)</text>
        <dbReference type="Rhea" id="RHEA:19129"/>
        <dbReference type="ChEBI" id="CHEBI:15378"/>
        <dbReference type="ChEBI" id="CHEBI:17748"/>
        <dbReference type="ChEBI" id="CHEBI:30616"/>
        <dbReference type="ChEBI" id="CHEBI:63528"/>
        <dbReference type="ChEBI" id="CHEBI:456216"/>
        <dbReference type="EC" id="2.7.1.21"/>
    </reaction>
</comment>
<comment type="similarity">
    <text evidence="3">Belongs to the thymidine kinase family.</text>
</comment>
<keyword id="KW-0067">ATP-binding</keyword>
<keyword id="KW-0237">DNA synthesis</keyword>
<keyword id="KW-0418">Kinase</keyword>
<keyword id="KW-0479">Metal-binding</keyword>
<keyword id="KW-0547">Nucleotide-binding</keyword>
<keyword id="KW-1185">Reference proteome</keyword>
<keyword id="KW-0808">Transferase</keyword>
<keyword id="KW-0862">Zinc</keyword>
<sequence>MSSGSIHVITGPMFSGKTSELVRRIKRFMLSNFKCIIIKHCGDNRYNEDDINKVYTHDLLFMEATASSNLSVLVPTLLNDGVQVIGIDEAQFFLDIVEFSESMANLGKTVIVAALNGDFKRELFGNVYKLLSLAETVSSLTAICVKCYCDASFSKRVTENKEVMDIGGKDKYIAVCRKCFFSN</sequence>